<gene>
    <name evidence="2" type="primary">odhA</name>
    <name type="synonym">citK</name>
    <name type="ordered locus">BSU19370</name>
</gene>
<name>ODO1_BACSU</name>
<feature type="chain" id="PRO_0000162169" description="2-oxoglutarate dehydrogenase E1 component">
    <location>
        <begin position="1"/>
        <end position="944"/>
    </location>
</feature>
<feature type="region of interest" description="Disordered" evidence="3">
    <location>
        <begin position="914"/>
        <end position="944"/>
    </location>
</feature>
<feature type="compositionally biased region" description="Basic and acidic residues" evidence="3">
    <location>
        <begin position="925"/>
        <end position="936"/>
    </location>
</feature>
<feature type="sequence conflict" description="In Ref. 1; CAA38576." evidence="4" ref="1">
    <original>N</original>
    <variation>Y</variation>
    <location>
        <position position="35"/>
    </location>
</feature>
<feature type="sequence conflict" description="In Ref. 5; AAC17864." evidence="4" ref="5">
    <original>L</original>
    <variation>S</variation>
    <location>
        <position position="110"/>
    </location>
</feature>
<feature type="sequence conflict" description="In Ref. 5; AAC17864." evidence="4" ref="5">
    <original>P</original>
    <variation>L</variation>
    <location>
        <position position="133"/>
    </location>
</feature>
<feature type="sequence conflict" description="In Ref. 5; AAC17864." evidence="4" ref="5">
    <original>I</original>
    <variation>T</variation>
    <location>
        <position position="231"/>
    </location>
</feature>
<feature type="sequence conflict" description="In Ref. 1; CAA38576." evidence="4" ref="1">
    <original>NKD</original>
    <variation>RS</variation>
    <location>
        <begin position="275"/>
        <end position="277"/>
    </location>
</feature>
<feature type="sequence conflict" description="In Ref. 1; CAA38576." evidence="4" ref="1">
    <original>GSIGISYGWTGDVKYHLGANRELQDAETKSARIT</original>
    <variation>DPLESATDGRGMSNTIWGRIGSFKTLKQNQPALP</variation>
    <location>
        <begin position="283"/>
        <end position="316"/>
    </location>
</feature>
<feature type="sequence conflict" description="In Ref. 1; CAA38576." evidence="4" ref="1">
    <original>VKQIFAE</original>
    <variation>SNKFSLK</variation>
    <location>
        <begin position="488"/>
        <end position="494"/>
    </location>
</feature>
<feature type="sequence conflict" description="In Ref. 1; CAA38576." evidence="4" ref="1">
    <original>DAY</original>
    <variation>VAI</variation>
    <location>
        <begin position="520"/>
        <end position="522"/>
    </location>
</feature>
<feature type="sequence conflict" description="In Ref. 1; CAA38576." evidence="4" ref="1">
    <original>DFD</original>
    <variation>HFH</variation>
    <location>
        <begin position="554"/>
        <end position="556"/>
    </location>
</feature>
<feature type="sequence conflict" description="In Ref. 1; CAA38576." evidence="4" ref="1">
    <original>NWP</original>
    <variation>TG</variation>
    <location>
        <begin position="567"/>
        <end position="569"/>
    </location>
</feature>
<feature type="sequence conflict" description="In Ref. 1; CAA38576." evidence="4" ref="1">
    <original>NVFGKLKRILERR</original>
    <variation>MFSQAKAHFRKT</variation>
    <location>
        <begin position="573"/>
        <end position="585"/>
    </location>
</feature>
<feature type="sequence conflict" description="In Ref. 6; AAA22628." evidence="4" ref="6">
    <original>SD</original>
    <variation>DV</variation>
    <location>
        <begin position="837"/>
        <end position="838"/>
    </location>
</feature>
<feature type="sequence conflict" description="In Ref. 1; CAA38576." evidence="4" ref="1">
    <original>D</original>
    <variation>V</variation>
    <location>
        <position position="838"/>
    </location>
</feature>
<feature type="sequence conflict" description="In Ref. 1; CAA38576." evidence="4" ref="1">
    <original>VHKKEQERIVSDSLTRKN</original>
    <variation>EFIKKNRNVLYLIA</variation>
    <location>
        <begin position="927"/>
        <end position="944"/>
    </location>
</feature>
<reference key="1">
    <citation type="journal article" date="1992" name="Mol. Gen. Genet.">
        <title>Organization and regulation of the Bacillus subtilis odhAB operon, which encodes two of the subenzymes of the 2-oxoglutarate dehydrogenase complex.</title>
        <authorList>
            <person name="Resnekov O."/>
            <person name="Melin L."/>
            <person name="Carlsson P."/>
            <person name="Mannerloev M."/>
            <person name="von Gabain A."/>
            <person name="Hederstedt L."/>
        </authorList>
    </citation>
    <scope>NUCLEOTIDE SEQUENCE [GENOMIC DNA]</scope>
    <source>
        <strain>168</strain>
    </source>
</reference>
<reference key="2">
    <citation type="journal article" date="1997" name="Nature">
        <title>The complete genome sequence of the Gram-positive bacterium Bacillus subtilis.</title>
        <authorList>
            <person name="Kunst F."/>
            <person name="Ogasawara N."/>
            <person name="Moszer I."/>
            <person name="Albertini A.M."/>
            <person name="Alloni G."/>
            <person name="Azevedo V."/>
            <person name="Bertero M.G."/>
            <person name="Bessieres P."/>
            <person name="Bolotin A."/>
            <person name="Borchert S."/>
            <person name="Borriss R."/>
            <person name="Boursier L."/>
            <person name="Brans A."/>
            <person name="Braun M."/>
            <person name="Brignell S.C."/>
            <person name="Bron S."/>
            <person name="Brouillet S."/>
            <person name="Bruschi C.V."/>
            <person name="Caldwell B."/>
            <person name="Capuano V."/>
            <person name="Carter N.M."/>
            <person name="Choi S.-K."/>
            <person name="Codani J.-J."/>
            <person name="Connerton I.F."/>
            <person name="Cummings N.J."/>
            <person name="Daniel R.A."/>
            <person name="Denizot F."/>
            <person name="Devine K.M."/>
            <person name="Duesterhoeft A."/>
            <person name="Ehrlich S.D."/>
            <person name="Emmerson P.T."/>
            <person name="Entian K.-D."/>
            <person name="Errington J."/>
            <person name="Fabret C."/>
            <person name="Ferrari E."/>
            <person name="Foulger D."/>
            <person name="Fritz C."/>
            <person name="Fujita M."/>
            <person name="Fujita Y."/>
            <person name="Fuma S."/>
            <person name="Galizzi A."/>
            <person name="Galleron N."/>
            <person name="Ghim S.-Y."/>
            <person name="Glaser P."/>
            <person name="Goffeau A."/>
            <person name="Golightly E.J."/>
            <person name="Grandi G."/>
            <person name="Guiseppi G."/>
            <person name="Guy B.J."/>
            <person name="Haga K."/>
            <person name="Haiech J."/>
            <person name="Harwood C.R."/>
            <person name="Henaut A."/>
            <person name="Hilbert H."/>
            <person name="Holsappel S."/>
            <person name="Hosono S."/>
            <person name="Hullo M.-F."/>
            <person name="Itaya M."/>
            <person name="Jones L.-M."/>
            <person name="Joris B."/>
            <person name="Karamata D."/>
            <person name="Kasahara Y."/>
            <person name="Klaerr-Blanchard M."/>
            <person name="Klein C."/>
            <person name="Kobayashi Y."/>
            <person name="Koetter P."/>
            <person name="Koningstein G."/>
            <person name="Krogh S."/>
            <person name="Kumano M."/>
            <person name="Kurita K."/>
            <person name="Lapidus A."/>
            <person name="Lardinois S."/>
            <person name="Lauber J."/>
            <person name="Lazarevic V."/>
            <person name="Lee S.-M."/>
            <person name="Levine A."/>
            <person name="Liu H."/>
            <person name="Masuda S."/>
            <person name="Mauel C."/>
            <person name="Medigue C."/>
            <person name="Medina N."/>
            <person name="Mellado R.P."/>
            <person name="Mizuno M."/>
            <person name="Moestl D."/>
            <person name="Nakai S."/>
            <person name="Noback M."/>
            <person name="Noone D."/>
            <person name="O'Reilly M."/>
            <person name="Ogawa K."/>
            <person name="Ogiwara A."/>
            <person name="Oudega B."/>
            <person name="Park S.-H."/>
            <person name="Parro V."/>
            <person name="Pohl T.M."/>
            <person name="Portetelle D."/>
            <person name="Porwollik S."/>
            <person name="Prescott A.M."/>
            <person name="Presecan E."/>
            <person name="Pujic P."/>
            <person name="Purnelle B."/>
            <person name="Rapoport G."/>
            <person name="Rey M."/>
            <person name="Reynolds S."/>
            <person name="Rieger M."/>
            <person name="Rivolta C."/>
            <person name="Rocha E."/>
            <person name="Roche B."/>
            <person name="Rose M."/>
            <person name="Sadaie Y."/>
            <person name="Sato T."/>
            <person name="Scanlan E."/>
            <person name="Schleich S."/>
            <person name="Schroeter R."/>
            <person name="Scoffone F."/>
            <person name="Sekiguchi J."/>
            <person name="Sekowska A."/>
            <person name="Seror S.J."/>
            <person name="Serror P."/>
            <person name="Shin B.-S."/>
            <person name="Soldo B."/>
            <person name="Sorokin A."/>
            <person name="Tacconi E."/>
            <person name="Takagi T."/>
            <person name="Takahashi H."/>
            <person name="Takemaru K."/>
            <person name="Takeuchi M."/>
            <person name="Tamakoshi A."/>
            <person name="Tanaka T."/>
            <person name="Terpstra P."/>
            <person name="Tognoni A."/>
            <person name="Tosato V."/>
            <person name="Uchiyama S."/>
            <person name="Vandenbol M."/>
            <person name="Vannier F."/>
            <person name="Vassarotti A."/>
            <person name="Viari A."/>
            <person name="Wambutt R."/>
            <person name="Wedler E."/>
            <person name="Wedler H."/>
            <person name="Weitzenegger T."/>
            <person name="Winters P."/>
            <person name="Wipat A."/>
            <person name="Yamamoto H."/>
            <person name="Yamane K."/>
            <person name="Yasumoto K."/>
            <person name="Yata K."/>
            <person name="Yoshida K."/>
            <person name="Yoshikawa H.-F."/>
            <person name="Zumstein E."/>
            <person name="Yoshikawa H."/>
            <person name="Danchin A."/>
        </authorList>
    </citation>
    <scope>NUCLEOTIDE SEQUENCE [LARGE SCALE GENOMIC DNA]</scope>
    <source>
        <strain>168</strain>
    </source>
</reference>
<reference key="3">
    <citation type="journal article" date="1999" name="Genome Res.">
        <title>Detecting and analyzing DNA sequencing errors: toward a higher quality of the Bacillus subtilis genome sequence.</title>
        <authorList>
            <person name="Medigue C."/>
            <person name="Rose M."/>
            <person name="Viari A."/>
            <person name="Danchin A."/>
        </authorList>
    </citation>
    <scope>SEQUENCE REVISION</scope>
</reference>
<reference key="4">
    <citation type="journal article" date="2009" name="Microbiology">
        <title>From a consortium sequence to a unified sequence: the Bacillus subtilis 168 reference genome a decade later.</title>
        <authorList>
            <person name="Barbe V."/>
            <person name="Cruveiller S."/>
            <person name="Kunst F."/>
            <person name="Lenoble P."/>
            <person name="Meurice G."/>
            <person name="Sekowska A."/>
            <person name="Vallenet D."/>
            <person name="Wang T."/>
            <person name="Moszer I."/>
            <person name="Medigue C."/>
            <person name="Danchin A."/>
        </authorList>
    </citation>
    <scope>SEQUENCE REVISION</scope>
</reference>
<reference key="5">
    <citation type="journal article" date="1998" name="DNA Res.">
        <title>Sequence analysis of the Bacillus subtilis 168 chromosome region between the sspC and odhA loci (184 degrees-180 degrees).</title>
        <authorList>
            <person name="Ghim S.-Y."/>
            <person name="Choi S.-K."/>
            <person name="Shin B.-S."/>
            <person name="Jeong Y.-M."/>
            <person name="Sorokin A."/>
            <person name="Ehrlich S.D."/>
            <person name="Park S.-H."/>
        </authorList>
    </citation>
    <scope>NUCLEOTIDE SEQUENCE [GENOMIC DNA] OF 1-270</scope>
    <source>
        <strain>168</strain>
    </source>
</reference>
<reference key="6">
    <citation type="journal article" date="1989" name="J. Bacteriol.">
        <title>Genetic characterization of Bacillus subtilis odhA and odhB, encoding 2-oxoglutarate dehydrogenase and dihydrolipoamide transsuccinylase, respectively.</title>
        <authorList>
            <person name="Carlsson P."/>
            <person name="Hederstedt L."/>
        </authorList>
    </citation>
    <scope>NUCLEOTIDE SEQUENCE [GENOMIC DNA] OF 652-944</scope>
    <source>
        <strain>168</strain>
    </source>
</reference>
<dbReference type="EC" id="1.2.4.2" evidence="1 2"/>
<dbReference type="EMBL" id="X54805">
    <property type="protein sequence ID" value="CAA38576.1"/>
    <property type="molecule type" value="Genomic_DNA"/>
</dbReference>
<dbReference type="EMBL" id="AL009126">
    <property type="protein sequence ID" value="CAB13829.3"/>
    <property type="molecule type" value="Genomic_DNA"/>
</dbReference>
<dbReference type="EMBL" id="AF026147">
    <property type="protein sequence ID" value="AAC17864.1"/>
    <property type="molecule type" value="Genomic_DNA"/>
</dbReference>
<dbReference type="EMBL" id="M27141">
    <property type="protein sequence ID" value="AAA22628.1"/>
    <property type="molecule type" value="Genomic_DNA"/>
</dbReference>
<dbReference type="PIR" id="S25295">
    <property type="entry name" value="A32879"/>
</dbReference>
<dbReference type="RefSeq" id="NP_389819.3">
    <property type="nucleotide sequence ID" value="NC_000964.3"/>
</dbReference>
<dbReference type="SMR" id="P23129"/>
<dbReference type="FunCoup" id="P23129">
    <property type="interactions" value="596"/>
</dbReference>
<dbReference type="STRING" id="224308.BSU19370"/>
<dbReference type="jPOST" id="P23129"/>
<dbReference type="PaxDb" id="224308-BSU19370"/>
<dbReference type="EnsemblBacteria" id="CAB13829">
    <property type="protein sequence ID" value="CAB13829"/>
    <property type="gene ID" value="BSU_19370"/>
</dbReference>
<dbReference type="GeneID" id="939507"/>
<dbReference type="KEGG" id="bsu:BSU19370"/>
<dbReference type="PATRIC" id="fig|224308.179.peg.2118"/>
<dbReference type="eggNOG" id="COG0567">
    <property type="taxonomic scope" value="Bacteria"/>
</dbReference>
<dbReference type="InParanoid" id="P23129"/>
<dbReference type="OrthoDB" id="9759785at2"/>
<dbReference type="PhylomeDB" id="P23129"/>
<dbReference type="BioCyc" id="BSUB:BSU19370-MONOMER"/>
<dbReference type="Proteomes" id="UP000001570">
    <property type="component" value="Chromosome"/>
</dbReference>
<dbReference type="GO" id="GO:0005829">
    <property type="term" value="C:cytosol"/>
    <property type="evidence" value="ECO:0000318"/>
    <property type="project" value="GO_Central"/>
</dbReference>
<dbReference type="GO" id="GO:0045252">
    <property type="term" value="C:oxoglutarate dehydrogenase complex"/>
    <property type="evidence" value="ECO:0000318"/>
    <property type="project" value="GO_Central"/>
</dbReference>
<dbReference type="GO" id="GO:0004591">
    <property type="term" value="F:oxoglutarate dehydrogenase (succinyl-transferring) activity"/>
    <property type="evidence" value="ECO:0000318"/>
    <property type="project" value="GO_Central"/>
</dbReference>
<dbReference type="GO" id="GO:0030976">
    <property type="term" value="F:thiamine pyrophosphate binding"/>
    <property type="evidence" value="ECO:0007669"/>
    <property type="project" value="UniProtKB-UniRule"/>
</dbReference>
<dbReference type="GO" id="GO:0006096">
    <property type="term" value="P:glycolytic process"/>
    <property type="evidence" value="ECO:0007669"/>
    <property type="project" value="UniProtKB-UniRule"/>
</dbReference>
<dbReference type="GO" id="GO:0006099">
    <property type="term" value="P:tricarboxylic acid cycle"/>
    <property type="evidence" value="ECO:0000318"/>
    <property type="project" value="GO_Central"/>
</dbReference>
<dbReference type="CDD" id="cd02016">
    <property type="entry name" value="TPP_E1_OGDC_like"/>
    <property type="match status" value="1"/>
</dbReference>
<dbReference type="FunFam" id="3.40.50.11610:FF:000002">
    <property type="entry name" value="2-oxoglutarate dehydrogenase E1 component"/>
    <property type="match status" value="1"/>
</dbReference>
<dbReference type="FunFam" id="3.40.50.970:FF:000036">
    <property type="entry name" value="2-oxoglutarate dehydrogenase E1 component"/>
    <property type="match status" value="1"/>
</dbReference>
<dbReference type="Gene3D" id="3.40.50.12470">
    <property type="match status" value="1"/>
</dbReference>
<dbReference type="Gene3D" id="3.40.50.970">
    <property type="match status" value="1"/>
</dbReference>
<dbReference type="Gene3D" id="3.40.50.11610">
    <property type="entry name" value="Multifunctional 2-oxoglutarate metabolism enzyme, C-terminal domain"/>
    <property type="match status" value="1"/>
</dbReference>
<dbReference type="HAMAP" id="MF_01169">
    <property type="entry name" value="SucA_OdhA"/>
    <property type="match status" value="1"/>
</dbReference>
<dbReference type="InterPro" id="IPR011603">
    <property type="entry name" value="2oxoglutarate_DH_E1"/>
</dbReference>
<dbReference type="InterPro" id="IPR023784">
    <property type="entry name" value="2oxoglutarate_DH_E1_bac"/>
</dbReference>
<dbReference type="InterPro" id="IPR001017">
    <property type="entry name" value="DH_E1"/>
</dbReference>
<dbReference type="InterPro" id="IPR042179">
    <property type="entry name" value="KGD_C_sf"/>
</dbReference>
<dbReference type="InterPro" id="IPR031717">
    <property type="entry name" value="ODO-1/KGD_C"/>
</dbReference>
<dbReference type="InterPro" id="IPR029061">
    <property type="entry name" value="THDP-binding"/>
</dbReference>
<dbReference type="InterPro" id="IPR005475">
    <property type="entry name" value="Transketolase-like_Pyr-bd"/>
</dbReference>
<dbReference type="NCBIfam" id="TIGR00239">
    <property type="entry name" value="2oxo_dh_E1"/>
    <property type="match status" value="1"/>
</dbReference>
<dbReference type="NCBIfam" id="NF006914">
    <property type="entry name" value="PRK09404.1"/>
    <property type="match status" value="1"/>
</dbReference>
<dbReference type="NCBIfam" id="NF008907">
    <property type="entry name" value="PRK12270.1"/>
    <property type="match status" value="1"/>
</dbReference>
<dbReference type="PANTHER" id="PTHR23152:SF4">
    <property type="entry name" value="2-OXOADIPATE DEHYDROGENASE COMPLEX COMPONENT E1"/>
    <property type="match status" value="1"/>
</dbReference>
<dbReference type="PANTHER" id="PTHR23152">
    <property type="entry name" value="2-OXOGLUTARATE DEHYDROGENASE"/>
    <property type="match status" value="1"/>
</dbReference>
<dbReference type="Pfam" id="PF00676">
    <property type="entry name" value="E1_dh"/>
    <property type="match status" value="1"/>
</dbReference>
<dbReference type="Pfam" id="PF16870">
    <property type="entry name" value="OxoGdeHyase_C"/>
    <property type="match status" value="1"/>
</dbReference>
<dbReference type="Pfam" id="PF02779">
    <property type="entry name" value="Transket_pyr"/>
    <property type="match status" value="1"/>
</dbReference>
<dbReference type="PIRSF" id="PIRSF000157">
    <property type="entry name" value="Oxoglu_dh_E1"/>
    <property type="match status" value="1"/>
</dbReference>
<dbReference type="SMART" id="SM00861">
    <property type="entry name" value="Transket_pyr"/>
    <property type="match status" value="1"/>
</dbReference>
<dbReference type="SUPFAM" id="SSF52518">
    <property type="entry name" value="Thiamin diphosphate-binding fold (THDP-binding)"/>
    <property type="match status" value="2"/>
</dbReference>
<proteinExistence type="inferred from homology"/>
<sequence>MFQNSMKQRMNWEDFYGPNLGYALELYDQYTQDPNSIDPDLKEMFDELGAPPSDIKEASGTKEKGRVTADLIQKIASAVRLAEDIRTYGHLNASVNPLRKDEKKSELFPLSDYGLTEEEIKAIPASVICKDAPKNISNGLEAIQYLRNTYKRTISFEFDHVHDFKEREWLTRKIESGELFQKNSAEKLSAVLERLTEVEGFEQFLHRTFVGQKRFSIEGLDALVPVLDDIIAQSVKSGTTSVNIGMAHRGRLNVLAHVLGKPYEIIFSEFQHAPNKDLVPSEGSIGISYGWTGDVKYHLGANRELQDAETKSARITLANNPSHLEFINPIVEGSTRAAQETRTQSGYPVQDETKSLAILIHGDAAFPGEGIVAETLNLSSLKGYQVGGAIHIIANNMIGFTTESAESRSTKYASDLAKGYEIPIVHVNADDPEACLSAVKFAVEYRKTFNKDFLIDLIGYRRYGHNEMDEPSTTQPMLYDAVRKHPTVKQIFAEKLVKEGVVTEEVVQNIEKSVTKRIEDAYQKVPSKKEHTACEIELPEPVSNGFPDVDTSIDFDVLRKLNGELINWPESFNVFGKLKRILERRAKAFDDDRKVEWSLAESLAFASILKDGTPIRLTGQDSERGTFAQRNLVLHDSETGKEFVPLHHLSDCSTSFAVHNSPLSEGSVLGFEYGYNVHSPETLVLWEAQYGDFANAAQVYFDQFISAGRAKWGQKSGLVMLLPHGYEGQGPEHSSGRIERFLQLAAENNWTVANLTSAAQYFHILRRQAKMLLREEIRPLVIMTPKSLLRNPNTVSEVQELSESRFQPVYEQSGLSHDYEKVTRLVLSSGKVSIDISDHFNKLEDGKEWLHIARIEQLYPFPAKGVKELFAKLPNLKEIVWVQEEPQNMGAWGYISPYLTEIAPEGVSVQYIGRRRRSSPAEGDPTVHKKEQERIVSDSLTRKN</sequence>
<evidence type="ECO:0000250" key="1">
    <source>
        <dbReference type="UniProtKB" id="P0AFG3"/>
    </source>
</evidence>
<evidence type="ECO:0000255" key="2">
    <source>
        <dbReference type="HAMAP-Rule" id="MF_01169"/>
    </source>
</evidence>
<evidence type="ECO:0000256" key="3">
    <source>
        <dbReference type="SAM" id="MobiDB-lite"/>
    </source>
</evidence>
<evidence type="ECO:0000305" key="4"/>
<accession>P23129</accession>
<accession>O68261</accession>
<accession>Q45642</accession>
<organism>
    <name type="scientific">Bacillus subtilis (strain 168)</name>
    <dbReference type="NCBI Taxonomy" id="224308"/>
    <lineage>
        <taxon>Bacteria</taxon>
        <taxon>Bacillati</taxon>
        <taxon>Bacillota</taxon>
        <taxon>Bacilli</taxon>
        <taxon>Bacillales</taxon>
        <taxon>Bacillaceae</taxon>
        <taxon>Bacillus</taxon>
    </lineage>
</organism>
<keyword id="KW-0324">Glycolysis</keyword>
<keyword id="KW-0560">Oxidoreductase</keyword>
<keyword id="KW-1185">Reference proteome</keyword>
<keyword id="KW-0786">Thiamine pyrophosphate</keyword>
<comment type="function">
    <text evidence="1 2">E1 component of the 2-oxoglutarate dehydrogenase (OGDH) complex which catalyzes the decarboxylation of 2-oxoglutarate, the first step in the conversion of 2-oxoglutarate to succinyl-CoA and CO(2).</text>
</comment>
<comment type="catalytic activity">
    <reaction evidence="1 2">
        <text>N(6)-[(R)-lipoyl]-L-lysyl-[protein] + 2-oxoglutarate + H(+) = N(6)-[(R)-S(8)-succinyldihydrolipoyl]-L-lysyl-[protein] + CO2</text>
        <dbReference type="Rhea" id="RHEA:12188"/>
        <dbReference type="Rhea" id="RHEA-COMP:10474"/>
        <dbReference type="Rhea" id="RHEA-COMP:20092"/>
        <dbReference type="ChEBI" id="CHEBI:15378"/>
        <dbReference type="ChEBI" id="CHEBI:16526"/>
        <dbReference type="ChEBI" id="CHEBI:16810"/>
        <dbReference type="ChEBI" id="CHEBI:83099"/>
        <dbReference type="ChEBI" id="CHEBI:83120"/>
        <dbReference type="EC" id="1.2.4.2"/>
    </reaction>
</comment>
<comment type="cofactor">
    <cofactor evidence="1 2">
        <name>thiamine diphosphate</name>
        <dbReference type="ChEBI" id="CHEBI:58937"/>
    </cofactor>
</comment>
<comment type="subunit">
    <text evidence="1 2">Homodimer. Part of the 2-oxoglutarate dehydrogenase (OGDH) complex composed of E1 (2-oxoglutarate dehydrogenase), E2 (dihydrolipoamide succinyltransferase) and E3 (dihydrolipoamide dehydrogenase); the complex contains multiple copies of the three enzymatic components (E1, E2 and E3).</text>
</comment>
<comment type="similarity">
    <text evidence="2 4">Belongs to the alpha-ketoglutarate dehydrogenase family.</text>
</comment>
<protein>
    <recommendedName>
        <fullName evidence="2">2-oxoglutarate dehydrogenase E1 component</fullName>
        <ecNumber evidence="1 2">1.2.4.2</ecNumber>
    </recommendedName>
    <alternativeName>
        <fullName evidence="2">Alpha-ketoglutarate dehydrogenase</fullName>
    </alternativeName>
</protein>